<feature type="chain" id="PRO_0000341255" description="SH2 domain-containing protein 7">
    <location>
        <begin position="1"/>
        <end position="458"/>
    </location>
</feature>
<feature type="domain" description="SH2" evidence="1">
    <location>
        <begin position="51"/>
        <end position="142"/>
    </location>
</feature>
<feature type="region of interest" description="Disordered" evidence="2">
    <location>
        <begin position="204"/>
        <end position="235"/>
    </location>
</feature>
<feature type="region of interest" description="Disordered" evidence="2">
    <location>
        <begin position="267"/>
        <end position="326"/>
    </location>
</feature>
<feature type="compositionally biased region" description="Basic and acidic residues" evidence="2">
    <location>
        <begin position="278"/>
        <end position="288"/>
    </location>
</feature>
<feature type="compositionally biased region" description="Polar residues" evidence="2">
    <location>
        <begin position="304"/>
        <end position="326"/>
    </location>
</feature>
<feature type="splice variant" id="VSP_034233" description="In isoform 2." evidence="3">
    <location>
        <begin position="1"/>
        <end position="174"/>
    </location>
</feature>
<proteinExistence type="evidence at transcript level"/>
<organism>
    <name type="scientific">Mus musculus</name>
    <name type="common">Mouse</name>
    <dbReference type="NCBI Taxonomy" id="10090"/>
    <lineage>
        <taxon>Eukaryota</taxon>
        <taxon>Metazoa</taxon>
        <taxon>Chordata</taxon>
        <taxon>Craniata</taxon>
        <taxon>Vertebrata</taxon>
        <taxon>Euteleostomi</taxon>
        <taxon>Mammalia</taxon>
        <taxon>Eutheria</taxon>
        <taxon>Euarchontoglires</taxon>
        <taxon>Glires</taxon>
        <taxon>Rodentia</taxon>
        <taxon>Myomorpha</taxon>
        <taxon>Muroidea</taxon>
        <taxon>Muridae</taxon>
        <taxon>Murinae</taxon>
        <taxon>Mus</taxon>
        <taxon>Mus</taxon>
    </lineage>
</organism>
<name>SH2D7_MOUSE</name>
<comment type="alternative products">
    <event type="alternative splicing"/>
    <isoform>
        <id>Q8BI17-1</id>
        <name>1</name>
        <sequence type="displayed"/>
    </isoform>
    <isoform>
        <id>Q8BI17-2</id>
        <name>2</name>
        <sequence type="described" ref="VSP_034233"/>
    </isoform>
</comment>
<comment type="sequence caution" evidence="4">
    <conflict type="erroneous initiation">
        <sequence resource="EMBL-CDS" id="BAC26825"/>
    </conflict>
</comment>
<sequence length="458" mass="50552">MEGGPEQLHLGKALEEAGGGRALAEIQELALKWFMETQAPSILQNGVLPPWFHGFITRKQTEQLLRDKALGSFLIRLSDRAVGYILSYRGSDRCRHFVINQLRNRRYLVSGDTLSHSTLDELLRHYQEVQLEPFGETLAAACPRLEENDLYDAINTGLQHTNLSLKIPATEFPSMLPDKATSPRLPAKPQVSFLHKKALDMSSRSVSDEVSAEVPTRVPPIPRRSPSLLDESPAGPSDVIYTDLRKINRAQLGLGTEVWGTLRPASAGSLACSPGREPSGKLSDEDQNKPNSLGPAPSGMKPDQGSTMPYTSLGFSLPPSSETLGSQATTWRQGFLKLSHEAQSSSEASSTDTYHLVETPGLQQEARDRPDQRGSPYEQIPTCWHGTAKLSYPGVSPTYSQQSGPMDYGYEKISGTSKLPEPGNTYEQIPAAKNKDTGRVHKPDKFRRLFFTDKKHKF</sequence>
<keyword id="KW-0025">Alternative splicing</keyword>
<keyword id="KW-1185">Reference proteome</keyword>
<keyword id="KW-0727">SH2 domain</keyword>
<gene>
    <name type="primary">Sh2d7</name>
</gene>
<dbReference type="EMBL" id="CT010507">
    <property type="status" value="NOT_ANNOTATED_CDS"/>
    <property type="molecule type" value="Genomic_DNA"/>
</dbReference>
<dbReference type="EMBL" id="BC116842">
    <property type="protein sequence ID" value="AAI16843.1"/>
    <property type="molecule type" value="mRNA"/>
</dbReference>
<dbReference type="EMBL" id="BC116844">
    <property type="protein sequence ID" value="AAI16845.1"/>
    <property type="molecule type" value="mRNA"/>
</dbReference>
<dbReference type="EMBL" id="AK030178">
    <property type="protein sequence ID" value="BAC26825.1"/>
    <property type="status" value="ALT_INIT"/>
    <property type="molecule type" value="mRNA"/>
</dbReference>
<dbReference type="CCDS" id="CCDS23190.2">
    <molecule id="Q8BI17-1"/>
</dbReference>
<dbReference type="RefSeq" id="NP_776139.2">
    <molecule id="Q8BI17-1"/>
    <property type="nucleotide sequence ID" value="NM_173778.4"/>
</dbReference>
<dbReference type="RefSeq" id="XP_006511220.1">
    <property type="nucleotide sequence ID" value="XM_006511157.1"/>
</dbReference>
<dbReference type="RefSeq" id="XP_006511221.1">
    <molecule id="Q8BI17-2"/>
    <property type="nucleotide sequence ID" value="XM_006511158.1"/>
</dbReference>
<dbReference type="SMR" id="Q8BI17"/>
<dbReference type="BioGRID" id="232699">
    <property type="interactions" value="1"/>
</dbReference>
<dbReference type="FunCoup" id="Q8BI17">
    <property type="interactions" value="14"/>
</dbReference>
<dbReference type="STRING" id="10090.ENSMUSP00000053690"/>
<dbReference type="PhosphoSitePlus" id="Q8BI17"/>
<dbReference type="PaxDb" id="10090-ENSMUSP00000053690"/>
<dbReference type="ProteomicsDB" id="257218">
    <molecule id="Q8BI17-1"/>
</dbReference>
<dbReference type="ProteomicsDB" id="257219">
    <molecule id="Q8BI17-2"/>
</dbReference>
<dbReference type="Antibodypedia" id="62529">
    <property type="antibodies" value="9 antibodies from 5 providers"/>
</dbReference>
<dbReference type="Ensembl" id="ENSMUST00000060242.12">
    <molecule id="Q8BI17-2"/>
    <property type="protein sequence ID" value="ENSMUSP00000053690.6"/>
    <property type="gene ID" value="ENSMUSG00000046460.16"/>
</dbReference>
<dbReference type="Ensembl" id="ENSMUST00000118413.3">
    <molecule id="Q8BI17-1"/>
    <property type="protein sequence ID" value="ENSMUSP00000113298.3"/>
    <property type="gene ID" value="ENSMUSG00000046460.16"/>
</dbReference>
<dbReference type="GeneID" id="244885"/>
<dbReference type="KEGG" id="mmu:244885"/>
<dbReference type="UCSC" id="uc009prd.1">
    <molecule id="Q8BI17-1"/>
    <property type="organism name" value="mouse"/>
</dbReference>
<dbReference type="AGR" id="MGI:2441692"/>
<dbReference type="CTD" id="646892"/>
<dbReference type="MGI" id="MGI:2441692">
    <property type="gene designation" value="Sh2d7"/>
</dbReference>
<dbReference type="VEuPathDB" id="HostDB:ENSMUSG00000046460"/>
<dbReference type="eggNOG" id="ENOG502QUGN">
    <property type="taxonomic scope" value="Eukaryota"/>
</dbReference>
<dbReference type="GeneTree" id="ENSGT00940000160977"/>
<dbReference type="HOGENOM" id="CLU_045989_0_0_1"/>
<dbReference type="InParanoid" id="Q8BI17"/>
<dbReference type="OMA" id="RWFMETQ"/>
<dbReference type="OrthoDB" id="6108017at2759"/>
<dbReference type="PhylomeDB" id="Q8BI17"/>
<dbReference type="TreeFam" id="TF337522"/>
<dbReference type="BioGRID-ORCS" id="244885">
    <property type="hits" value="1 hit in 76 CRISPR screens"/>
</dbReference>
<dbReference type="PRO" id="PR:Q8BI17"/>
<dbReference type="Proteomes" id="UP000000589">
    <property type="component" value="Chromosome 9"/>
</dbReference>
<dbReference type="RNAct" id="Q8BI17">
    <property type="molecule type" value="protein"/>
</dbReference>
<dbReference type="Bgee" id="ENSMUSG00000046460">
    <property type="expression patterns" value="Expressed in quadriceps femoris and 19 other cell types or tissues"/>
</dbReference>
<dbReference type="CDD" id="cd10417">
    <property type="entry name" value="SH2_SH2D7"/>
    <property type="match status" value="1"/>
</dbReference>
<dbReference type="FunFam" id="3.30.505.10:FF:000059">
    <property type="entry name" value="hematopoietic SH2 domain-containing protein"/>
    <property type="match status" value="1"/>
</dbReference>
<dbReference type="Gene3D" id="3.30.505.10">
    <property type="entry name" value="SH2 domain"/>
    <property type="match status" value="1"/>
</dbReference>
<dbReference type="InterPro" id="IPR000980">
    <property type="entry name" value="SH2"/>
</dbReference>
<dbReference type="InterPro" id="IPR036860">
    <property type="entry name" value="SH2_dom_sf"/>
</dbReference>
<dbReference type="InterPro" id="IPR035885">
    <property type="entry name" value="SH2D7_SH2"/>
</dbReference>
<dbReference type="PANTHER" id="PTHR14388:SF6">
    <property type="entry name" value="SH2 DOMAIN-CONTAINING PROTEIN 7"/>
    <property type="match status" value="1"/>
</dbReference>
<dbReference type="PANTHER" id="PTHR14388">
    <property type="entry name" value="T CELL-SPECIFIC ADAPTER PROTEIN TSAD"/>
    <property type="match status" value="1"/>
</dbReference>
<dbReference type="Pfam" id="PF00017">
    <property type="entry name" value="SH2"/>
    <property type="match status" value="1"/>
</dbReference>
<dbReference type="PRINTS" id="PR00401">
    <property type="entry name" value="SH2DOMAIN"/>
</dbReference>
<dbReference type="SMART" id="SM00252">
    <property type="entry name" value="SH2"/>
    <property type="match status" value="1"/>
</dbReference>
<dbReference type="SUPFAM" id="SSF55550">
    <property type="entry name" value="SH2 domain"/>
    <property type="match status" value="1"/>
</dbReference>
<dbReference type="PROSITE" id="PS50001">
    <property type="entry name" value="SH2"/>
    <property type="match status" value="1"/>
</dbReference>
<accession>Q8BI17</accession>
<protein>
    <recommendedName>
        <fullName>SH2 domain-containing protein 7</fullName>
    </recommendedName>
</protein>
<evidence type="ECO:0000255" key="1">
    <source>
        <dbReference type="PROSITE-ProRule" id="PRU00191"/>
    </source>
</evidence>
<evidence type="ECO:0000256" key="2">
    <source>
        <dbReference type="SAM" id="MobiDB-lite"/>
    </source>
</evidence>
<evidence type="ECO:0000303" key="3">
    <source>
    </source>
</evidence>
<evidence type="ECO:0000305" key="4"/>
<reference key="1">
    <citation type="journal article" date="2009" name="PLoS Biol.">
        <title>Lineage-specific biology revealed by a finished genome assembly of the mouse.</title>
        <authorList>
            <person name="Church D.M."/>
            <person name="Goodstadt L."/>
            <person name="Hillier L.W."/>
            <person name="Zody M.C."/>
            <person name="Goldstein S."/>
            <person name="She X."/>
            <person name="Bult C.J."/>
            <person name="Agarwala R."/>
            <person name="Cherry J.L."/>
            <person name="DiCuccio M."/>
            <person name="Hlavina W."/>
            <person name="Kapustin Y."/>
            <person name="Meric P."/>
            <person name="Maglott D."/>
            <person name="Birtle Z."/>
            <person name="Marques A.C."/>
            <person name="Graves T."/>
            <person name="Zhou S."/>
            <person name="Teague B."/>
            <person name="Potamousis K."/>
            <person name="Churas C."/>
            <person name="Place M."/>
            <person name="Herschleb J."/>
            <person name="Runnheim R."/>
            <person name="Forrest D."/>
            <person name="Amos-Landgraf J."/>
            <person name="Schwartz D.C."/>
            <person name="Cheng Z."/>
            <person name="Lindblad-Toh K."/>
            <person name="Eichler E.E."/>
            <person name="Ponting C.P."/>
        </authorList>
    </citation>
    <scope>NUCLEOTIDE SEQUENCE [LARGE SCALE GENOMIC DNA]</scope>
    <source>
        <strain>C57BL/6J</strain>
    </source>
</reference>
<reference key="2">
    <citation type="journal article" date="2004" name="Genome Res.">
        <title>The status, quality, and expansion of the NIH full-length cDNA project: the Mammalian Gene Collection (MGC).</title>
        <authorList>
            <consortium name="The MGC Project Team"/>
        </authorList>
    </citation>
    <scope>NUCLEOTIDE SEQUENCE [LARGE SCALE MRNA] (ISOFORM 2)</scope>
    <source>
        <tissue>Brain</tissue>
    </source>
</reference>
<reference key="3">
    <citation type="journal article" date="2005" name="Science">
        <title>The transcriptional landscape of the mammalian genome.</title>
        <authorList>
            <person name="Carninci P."/>
            <person name="Kasukawa T."/>
            <person name="Katayama S."/>
            <person name="Gough J."/>
            <person name="Frith M.C."/>
            <person name="Maeda N."/>
            <person name="Oyama R."/>
            <person name="Ravasi T."/>
            <person name="Lenhard B."/>
            <person name="Wells C."/>
            <person name="Kodzius R."/>
            <person name="Shimokawa K."/>
            <person name="Bajic V.B."/>
            <person name="Brenner S.E."/>
            <person name="Batalov S."/>
            <person name="Forrest A.R."/>
            <person name="Zavolan M."/>
            <person name="Davis M.J."/>
            <person name="Wilming L.G."/>
            <person name="Aidinis V."/>
            <person name="Allen J.E."/>
            <person name="Ambesi-Impiombato A."/>
            <person name="Apweiler R."/>
            <person name="Aturaliya R.N."/>
            <person name="Bailey T.L."/>
            <person name="Bansal M."/>
            <person name="Baxter L."/>
            <person name="Beisel K.W."/>
            <person name="Bersano T."/>
            <person name="Bono H."/>
            <person name="Chalk A.M."/>
            <person name="Chiu K.P."/>
            <person name="Choudhary V."/>
            <person name="Christoffels A."/>
            <person name="Clutterbuck D.R."/>
            <person name="Crowe M.L."/>
            <person name="Dalla E."/>
            <person name="Dalrymple B.P."/>
            <person name="de Bono B."/>
            <person name="Della Gatta G."/>
            <person name="di Bernardo D."/>
            <person name="Down T."/>
            <person name="Engstrom P."/>
            <person name="Fagiolini M."/>
            <person name="Faulkner G."/>
            <person name="Fletcher C.F."/>
            <person name="Fukushima T."/>
            <person name="Furuno M."/>
            <person name="Futaki S."/>
            <person name="Gariboldi M."/>
            <person name="Georgii-Hemming P."/>
            <person name="Gingeras T.R."/>
            <person name="Gojobori T."/>
            <person name="Green R.E."/>
            <person name="Gustincich S."/>
            <person name="Harbers M."/>
            <person name="Hayashi Y."/>
            <person name="Hensch T.K."/>
            <person name="Hirokawa N."/>
            <person name="Hill D."/>
            <person name="Huminiecki L."/>
            <person name="Iacono M."/>
            <person name="Ikeo K."/>
            <person name="Iwama A."/>
            <person name="Ishikawa T."/>
            <person name="Jakt M."/>
            <person name="Kanapin A."/>
            <person name="Katoh M."/>
            <person name="Kawasawa Y."/>
            <person name="Kelso J."/>
            <person name="Kitamura H."/>
            <person name="Kitano H."/>
            <person name="Kollias G."/>
            <person name="Krishnan S.P."/>
            <person name="Kruger A."/>
            <person name="Kummerfeld S.K."/>
            <person name="Kurochkin I.V."/>
            <person name="Lareau L.F."/>
            <person name="Lazarevic D."/>
            <person name="Lipovich L."/>
            <person name="Liu J."/>
            <person name="Liuni S."/>
            <person name="McWilliam S."/>
            <person name="Madan Babu M."/>
            <person name="Madera M."/>
            <person name="Marchionni L."/>
            <person name="Matsuda H."/>
            <person name="Matsuzawa S."/>
            <person name="Miki H."/>
            <person name="Mignone F."/>
            <person name="Miyake S."/>
            <person name="Morris K."/>
            <person name="Mottagui-Tabar S."/>
            <person name="Mulder N."/>
            <person name="Nakano N."/>
            <person name="Nakauchi H."/>
            <person name="Ng P."/>
            <person name="Nilsson R."/>
            <person name="Nishiguchi S."/>
            <person name="Nishikawa S."/>
            <person name="Nori F."/>
            <person name="Ohara O."/>
            <person name="Okazaki Y."/>
            <person name="Orlando V."/>
            <person name="Pang K.C."/>
            <person name="Pavan W.J."/>
            <person name="Pavesi G."/>
            <person name="Pesole G."/>
            <person name="Petrovsky N."/>
            <person name="Piazza S."/>
            <person name="Reed J."/>
            <person name="Reid J.F."/>
            <person name="Ring B.Z."/>
            <person name="Ringwald M."/>
            <person name="Rost B."/>
            <person name="Ruan Y."/>
            <person name="Salzberg S.L."/>
            <person name="Sandelin A."/>
            <person name="Schneider C."/>
            <person name="Schoenbach C."/>
            <person name="Sekiguchi K."/>
            <person name="Semple C.A."/>
            <person name="Seno S."/>
            <person name="Sessa L."/>
            <person name="Sheng Y."/>
            <person name="Shibata Y."/>
            <person name="Shimada H."/>
            <person name="Shimada K."/>
            <person name="Silva D."/>
            <person name="Sinclair B."/>
            <person name="Sperling S."/>
            <person name="Stupka E."/>
            <person name="Sugiura K."/>
            <person name="Sultana R."/>
            <person name="Takenaka Y."/>
            <person name="Taki K."/>
            <person name="Tammoja K."/>
            <person name="Tan S.L."/>
            <person name="Tang S."/>
            <person name="Taylor M.S."/>
            <person name="Tegner J."/>
            <person name="Teichmann S.A."/>
            <person name="Ueda H.R."/>
            <person name="van Nimwegen E."/>
            <person name="Verardo R."/>
            <person name="Wei C.L."/>
            <person name="Yagi K."/>
            <person name="Yamanishi H."/>
            <person name="Zabarovsky E."/>
            <person name="Zhu S."/>
            <person name="Zimmer A."/>
            <person name="Hide W."/>
            <person name="Bult C."/>
            <person name="Grimmond S.M."/>
            <person name="Teasdale R.D."/>
            <person name="Liu E.T."/>
            <person name="Brusic V."/>
            <person name="Quackenbush J."/>
            <person name="Wahlestedt C."/>
            <person name="Mattick J.S."/>
            <person name="Hume D.A."/>
            <person name="Kai C."/>
            <person name="Sasaki D."/>
            <person name="Tomaru Y."/>
            <person name="Fukuda S."/>
            <person name="Kanamori-Katayama M."/>
            <person name="Suzuki M."/>
            <person name="Aoki J."/>
            <person name="Arakawa T."/>
            <person name="Iida J."/>
            <person name="Imamura K."/>
            <person name="Itoh M."/>
            <person name="Kato T."/>
            <person name="Kawaji H."/>
            <person name="Kawagashira N."/>
            <person name="Kawashima T."/>
            <person name="Kojima M."/>
            <person name="Kondo S."/>
            <person name="Konno H."/>
            <person name="Nakano K."/>
            <person name="Ninomiya N."/>
            <person name="Nishio T."/>
            <person name="Okada M."/>
            <person name="Plessy C."/>
            <person name="Shibata K."/>
            <person name="Shiraki T."/>
            <person name="Suzuki S."/>
            <person name="Tagami M."/>
            <person name="Waki K."/>
            <person name="Watahiki A."/>
            <person name="Okamura-Oho Y."/>
            <person name="Suzuki H."/>
            <person name="Kawai J."/>
            <person name="Hayashizaki Y."/>
        </authorList>
    </citation>
    <scope>NUCLEOTIDE SEQUENCE [LARGE SCALE MRNA] OF 97-458 (ISOFORM 1)</scope>
    <source>
        <strain>C57BL/6J</strain>
        <tissue>Testis</tissue>
    </source>
</reference>